<organism>
    <name type="scientific">Chlamydia trachomatis serovar A (strain ATCC VR-571B / DSM 19440 / HAR-13)</name>
    <dbReference type="NCBI Taxonomy" id="315277"/>
    <lineage>
        <taxon>Bacteria</taxon>
        <taxon>Pseudomonadati</taxon>
        <taxon>Chlamydiota</taxon>
        <taxon>Chlamydiia</taxon>
        <taxon>Chlamydiales</taxon>
        <taxon>Chlamydiaceae</taxon>
        <taxon>Chlamydia/Chlamydophila group</taxon>
        <taxon>Chlamydia</taxon>
    </lineage>
</organism>
<name>RS8_CHLTA</name>
<sequence>MGMTSDSIANLLTRIRNALMAEHLYVDIEHSKMLEAIVRILKQHGFVAHFLVKEENRKRLMRVFLRYGEDRRPVIHALKRVSKPSRRVYVSAAKIPYVFGNMGIAVLSTPQGVLEGSVARAKNVGGELLCLVW</sequence>
<accession>Q3KLI2</accession>
<evidence type="ECO:0000255" key="1">
    <source>
        <dbReference type="HAMAP-Rule" id="MF_01302"/>
    </source>
</evidence>
<evidence type="ECO:0000305" key="2"/>
<reference key="1">
    <citation type="journal article" date="2005" name="Infect. Immun.">
        <title>Comparative genomic analysis of Chlamydia trachomatis oculotropic and genitotropic strains.</title>
        <authorList>
            <person name="Carlson J.H."/>
            <person name="Porcella S.F."/>
            <person name="McClarty G."/>
            <person name="Caldwell H.D."/>
        </authorList>
    </citation>
    <scope>NUCLEOTIDE SEQUENCE [LARGE SCALE GENOMIC DNA]</scope>
    <source>
        <strain>ATCC VR-571B / DSM 19440 / HAR-13</strain>
    </source>
</reference>
<comment type="function">
    <text evidence="1">One of the primary rRNA binding proteins, it binds directly to 16S rRNA central domain where it helps coordinate assembly of the platform of the 30S subunit.</text>
</comment>
<comment type="subunit">
    <text evidence="1">Part of the 30S ribosomal subunit. Contacts proteins S5 and S12.</text>
</comment>
<comment type="similarity">
    <text evidence="1">Belongs to the universal ribosomal protein uS8 family.</text>
</comment>
<feature type="chain" id="PRO_0000225862" description="Small ribosomal subunit protein uS8">
    <location>
        <begin position="1"/>
        <end position="133"/>
    </location>
</feature>
<gene>
    <name evidence="1" type="primary">rpsH</name>
    <name type="ordered locus">CTA_0564</name>
</gene>
<keyword id="KW-0687">Ribonucleoprotein</keyword>
<keyword id="KW-0689">Ribosomal protein</keyword>
<keyword id="KW-0694">RNA-binding</keyword>
<keyword id="KW-0699">rRNA-binding</keyword>
<dbReference type="EMBL" id="CP000051">
    <property type="protein sequence ID" value="AAX50790.1"/>
    <property type="molecule type" value="Genomic_DNA"/>
</dbReference>
<dbReference type="RefSeq" id="WP_009871879.1">
    <property type="nucleotide sequence ID" value="NC_007429.1"/>
</dbReference>
<dbReference type="SMR" id="Q3KLI2"/>
<dbReference type="KEGG" id="cta:CTA_0564"/>
<dbReference type="HOGENOM" id="CLU_098428_0_2_0"/>
<dbReference type="Proteomes" id="UP000002532">
    <property type="component" value="Chromosome"/>
</dbReference>
<dbReference type="GO" id="GO:1990904">
    <property type="term" value="C:ribonucleoprotein complex"/>
    <property type="evidence" value="ECO:0007669"/>
    <property type="project" value="UniProtKB-KW"/>
</dbReference>
<dbReference type="GO" id="GO:0005840">
    <property type="term" value="C:ribosome"/>
    <property type="evidence" value="ECO:0007669"/>
    <property type="project" value="UniProtKB-KW"/>
</dbReference>
<dbReference type="GO" id="GO:0019843">
    <property type="term" value="F:rRNA binding"/>
    <property type="evidence" value="ECO:0007669"/>
    <property type="project" value="UniProtKB-UniRule"/>
</dbReference>
<dbReference type="GO" id="GO:0003735">
    <property type="term" value="F:structural constituent of ribosome"/>
    <property type="evidence" value="ECO:0007669"/>
    <property type="project" value="InterPro"/>
</dbReference>
<dbReference type="GO" id="GO:0006412">
    <property type="term" value="P:translation"/>
    <property type="evidence" value="ECO:0007669"/>
    <property type="project" value="UniProtKB-UniRule"/>
</dbReference>
<dbReference type="FunFam" id="3.30.1370.30:FF:000002">
    <property type="entry name" value="30S ribosomal protein S8"/>
    <property type="match status" value="1"/>
</dbReference>
<dbReference type="FunFam" id="3.30.1490.10:FF:000001">
    <property type="entry name" value="30S ribosomal protein S8"/>
    <property type="match status" value="1"/>
</dbReference>
<dbReference type="Gene3D" id="3.30.1370.30">
    <property type="match status" value="1"/>
</dbReference>
<dbReference type="Gene3D" id="3.30.1490.10">
    <property type="match status" value="1"/>
</dbReference>
<dbReference type="HAMAP" id="MF_01302_B">
    <property type="entry name" value="Ribosomal_uS8_B"/>
    <property type="match status" value="1"/>
</dbReference>
<dbReference type="InterPro" id="IPR000630">
    <property type="entry name" value="Ribosomal_uS8"/>
</dbReference>
<dbReference type="InterPro" id="IPR047863">
    <property type="entry name" value="Ribosomal_uS8_CS"/>
</dbReference>
<dbReference type="InterPro" id="IPR035987">
    <property type="entry name" value="Ribosomal_uS8_sf"/>
</dbReference>
<dbReference type="NCBIfam" id="NF001109">
    <property type="entry name" value="PRK00136.1"/>
    <property type="match status" value="1"/>
</dbReference>
<dbReference type="PANTHER" id="PTHR11758">
    <property type="entry name" value="40S RIBOSOMAL PROTEIN S15A"/>
    <property type="match status" value="1"/>
</dbReference>
<dbReference type="Pfam" id="PF00410">
    <property type="entry name" value="Ribosomal_S8"/>
    <property type="match status" value="1"/>
</dbReference>
<dbReference type="SUPFAM" id="SSF56047">
    <property type="entry name" value="Ribosomal protein S8"/>
    <property type="match status" value="1"/>
</dbReference>
<dbReference type="PROSITE" id="PS00053">
    <property type="entry name" value="RIBOSOMAL_S8"/>
    <property type="match status" value="1"/>
</dbReference>
<protein>
    <recommendedName>
        <fullName evidence="1">Small ribosomal subunit protein uS8</fullName>
    </recommendedName>
    <alternativeName>
        <fullName evidence="2">30S ribosomal protein S8</fullName>
    </alternativeName>
</protein>
<proteinExistence type="inferred from homology"/>